<sequence>MAKKVEKLVKLQIPAGKATPAPPVGPALGQAGINIMGFTKEFNARTADQAGMIIPVVISVYEDKSFDFITKTPPAAVLLKKAAGVEKGSGTPNTTKVATVTRAQVQEIAETKMPDLNAANIEAAMRMIEGTARSMGFTVTD</sequence>
<reference key="1">
    <citation type="journal article" date="2007" name="J. Bacteriol.">
        <title>Complete genome of acute rheumatic fever-associated serotype M5 Streptococcus pyogenes strain Manfredo.</title>
        <authorList>
            <person name="Holden M.T.G."/>
            <person name="Scott A."/>
            <person name="Cherevach I."/>
            <person name="Chillingworth T."/>
            <person name="Churcher C."/>
            <person name="Cronin A."/>
            <person name="Dowd L."/>
            <person name="Feltwell T."/>
            <person name="Hamlin N."/>
            <person name="Holroyd S."/>
            <person name="Jagels K."/>
            <person name="Moule S."/>
            <person name="Mungall K."/>
            <person name="Quail M.A."/>
            <person name="Price C."/>
            <person name="Rabbinowitsch E."/>
            <person name="Sharp S."/>
            <person name="Skelton J."/>
            <person name="Whitehead S."/>
            <person name="Barrell B.G."/>
            <person name="Kehoe M."/>
            <person name="Parkhill J."/>
        </authorList>
    </citation>
    <scope>NUCLEOTIDE SEQUENCE [LARGE SCALE GENOMIC DNA]</scope>
    <source>
        <strain>Manfredo</strain>
    </source>
</reference>
<dbReference type="EMBL" id="AM295007">
    <property type="protein sequence ID" value="CAM30812.1"/>
    <property type="molecule type" value="Genomic_DNA"/>
</dbReference>
<dbReference type="RefSeq" id="WP_002990800.1">
    <property type="nucleotide sequence ID" value="NC_009332.1"/>
</dbReference>
<dbReference type="SMR" id="A2RG33"/>
<dbReference type="GeneID" id="69901302"/>
<dbReference type="KEGG" id="spf:SpyM51491"/>
<dbReference type="HOGENOM" id="CLU_074237_2_1_9"/>
<dbReference type="GO" id="GO:0022625">
    <property type="term" value="C:cytosolic large ribosomal subunit"/>
    <property type="evidence" value="ECO:0007669"/>
    <property type="project" value="TreeGrafter"/>
</dbReference>
<dbReference type="GO" id="GO:0070180">
    <property type="term" value="F:large ribosomal subunit rRNA binding"/>
    <property type="evidence" value="ECO:0007669"/>
    <property type="project" value="UniProtKB-UniRule"/>
</dbReference>
<dbReference type="GO" id="GO:0003735">
    <property type="term" value="F:structural constituent of ribosome"/>
    <property type="evidence" value="ECO:0007669"/>
    <property type="project" value="InterPro"/>
</dbReference>
<dbReference type="GO" id="GO:0006412">
    <property type="term" value="P:translation"/>
    <property type="evidence" value="ECO:0007669"/>
    <property type="project" value="UniProtKB-UniRule"/>
</dbReference>
<dbReference type="CDD" id="cd00349">
    <property type="entry name" value="Ribosomal_L11"/>
    <property type="match status" value="1"/>
</dbReference>
<dbReference type="FunFam" id="1.10.10.250:FF:000001">
    <property type="entry name" value="50S ribosomal protein L11"/>
    <property type="match status" value="1"/>
</dbReference>
<dbReference type="FunFam" id="3.30.1550.10:FF:000001">
    <property type="entry name" value="50S ribosomal protein L11"/>
    <property type="match status" value="1"/>
</dbReference>
<dbReference type="Gene3D" id="1.10.10.250">
    <property type="entry name" value="Ribosomal protein L11, C-terminal domain"/>
    <property type="match status" value="1"/>
</dbReference>
<dbReference type="Gene3D" id="3.30.1550.10">
    <property type="entry name" value="Ribosomal protein L11/L12, N-terminal domain"/>
    <property type="match status" value="1"/>
</dbReference>
<dbReference type="HAMAP" id="MF_00736">
    <property type="entry name" value="Ribosomal_uL11"/>
    <property type="match status" value="1"/>
</dbReference>
<dbReference type="InterPro" id="IPR000911">
    <property type="entry name" value="Ribosomal_uL11"/>
</dbReference>
<dbReference type="InterPro" id="IPR006519">
    <property type="entry name" value="Ribosomal_uL11_bac-typ"/>
</dbReference>
<dbReference type="InterPro" id="IPR020783">
    <property type="entry name" value="Ribosomal_uL11_C"/>
</dbReference>
<dbReference type="InterPro" id="IPR036769">
    <property type="entry name" value="Ribosomal_uL11_C_sf"/>
</dbReference>
<dbReference type="InterPro" id="IPR020785">
    <property type="entry name" value="Ribosomal_uL11_CS"/>
</dbReference>
<dbReference type="InterPro" id="IPR020784">
    <property type="entry name" value="Ribosomal_uL11_N"/>
</dbReference>
<dbReference type="InterPro" id="IPR036796">
    <property type="entry name" value="Ribosomal_uL11_N_sf"/>
</dbReference>
<dbReference type="NCBIfam" id="TIGR01632">
    <property type="entry name" value="L11_bact"/>
    <property type="match status" value="1"/>
</dbReference>
<dbReference type="PANTHER" id="PTHR11661">
    <property type="entry name" value="60S RIBOSOMAL PROTEIN L12"/>
    <property type="match status" value="1"/>
</dbReference>
<dbReference type="PANTHER" id="PTHR11661:SF1">
    <property type="entry name" value="LARGE RIBOSOMAL SUBUNIT PROTEIN UL11M"/>
    <property type="match status" value="1"/>
</dbReference>
<dbReference type="Pfam" id="PF00298">
    <property type="entry name" value="Ribosomal_L11"/>
    <property type="match status" value="1"/>
</dbReference>
<dbReference type="Pfam" id="PF03946">
    <property type="entry name" value="Ribosomal_L11_N"/>
    <property type="match status" value="1"/>
</dbReference>
<dbReference type="SMART" id="SM00649">
    <property type="entry name" value="RL11"/>
    <property type="match status" value="1"/>
</dbReference>
<dbReference type="SUPFAM" id="SSF54747">
    <property type="entry name" value="Ribosomal L11/L12e N-terminal domain"/>
    <property type="match status" value="1"/>
</dbReference>
<dbReference type="SUPFAM" id="SSF46906">
    <property type="entry name" value="Ribosomal protein L11, C-terminal domain"/>
    <property type="match status" value="1"/>
</dbReference>
<dbReference type="PROSITE" id="PS00359">
    <property type="entry name" value="RIBOSOMAL_L11"/>
    <property type="match status" value="1"/>
</dbReference>
<organism>
    <name type="scientific">Streptococcus pyogenes serotype M5 (strain Manfredo)</name>
    <dbReference type="NCBI Taxonomy" id="160491"/>
    <lineage>
        <taxon>Bacteria</taxon>
        <taxon>Bacillati</taxon>
        <taxon>Bacillota</taxon>
        <taxon>Bacilli</taxon>
        <taxon>Lactobacillales</taxon>
        <taxon>Streptococcaceae</taxon>
        <taxon>Streptococcus</taxon>
    </lineage>
</organism>
<proteinExistence type="inferred from homology"/>
<name>RL11_STRPG</name>
<gene>
    <name evidence="1" type="primary">rplK</name>
    <name type="ordered locus">SpyM51491</name>
</gene>
<feature type="chain" id="PRO_1000046275" description="Large ribosomal subunit protein uL11">
    <location>
        <begin position="1"/>
        <end position="141"/>
    </location>
</feature>
<keyword id="KW-0488">Methylation</keyword>
<keyword id="KW-0687">Ribonucleoprotein</keyword>
<keyword id="KW-0689">Ribosomal protein</keyword>
<keyword id="KW-0694">RNA-binding</keyword>
<keyword id="KW-0699">rRNA-binding</keyword>
<comment type="function">
    <text evidence="1">Forms part of the ribosomal stalk which helps the ribosome interact with GTP-bound translation factors.</text>
</comment>
<comment type="subunit">
    <text evidence="1">Part of the ribosomal stalk of the 50S ribosomal subunit. Interacts with L10 and the large rRNA to form the base of the stalk. L10 forms an elongated spine to which L12 dimers bind in a sequential fashion forming a multimeric L10(L12)X complex.</text>
</comment>
<comment type="PTM">
    <text evidence="1">One or more lysine residues are methylated.</text>
</comment>
<comment type="similarity">
    <text evidence="1">Belongs to the universal ribosomal protein uL11 family.</text>
</comment>
<protein>
    <recommendedName>
        <fullName evidence="1">Large ribosomal subunit protein uL11</fullName>
    </recommendedName>
    <alternativeName>
        <fullName evidence="2">50S ribosomal protein L11</fullName>
    </alternativeName>
</protein>
<evidence type="ECO:0000255" key="1">
    <source>
        <dbReference type="HAMAP-Rule" id="MF_00736"/>
    </source>
</evidence>
<evidence type="ECO:0000305" key="2"/>
<accession>A2RG33</accession>